<accession>B2V347</accession>
<name>DTD_CLOBA</name>
<protein>
    <recommendedName>
        <fullName evidence="1">D-aminoacyl-tRNA deacylase</fullName>
        <shortName evidence="1">DTD</shortName>
        <ecNumber evidence="1">3.1.1.96</ecNumber>
    </recommendedName>
    <alternativeName>
        <fullName evidence="1">Gly-tRNA(Ala) deacylase</fullName>
    </alternativeName>
</protein>
<proteinExistence type="inferred from homology"/>
<gene>
    <name evidence="1" type="primary">dtd</name>
    <name type="ordered locus">CLH_0966</name>
</gene>
<reference key="1">
    <citation type="submission" date="2008-05" db="EMBL/GenBank/DDBJ databases">
        <title>Complete genome sequence of Clostridium botulinum E3 str. Alaska E43.</title>
        <authorList>
            <person name="Brinkac L.M."/>
            <person name="Brown J.L."/>
            <person name="Bruce D."/>
            <person name="Detter C."/>
            <person name="Munk C."/>
            <person name="Smith L.A."/>
            <person name="Smith T.J."/>
            <person name="Sutton G."/>
            <person name="Brettin T.S."/>
        </authorList>
    </citation>
    <scope>NUCLEOTIDE SEQUENCE [LARGE SCALE GENOMIC DNA]</scope>
    <source>
        <strain>Alaska E43 / Type E3</strain>
    </source>
</reference>
<organism>
    <name type="scientific">Clostridium botulinum (strain Alaska E43 / Type E3)</name>
    <dbReference type="NCBI Taxonomy" id="508767"/>
    <lineage>
        <taxon>Bacteria</taxon>
        <taxon>Bacillati</taxon>
        <taxon>Bacillota</taxon>
        <taxon>Clostridia</taxon>
        <taxon>Eubacteriales</taxon>
        <taxon>Clostridiaceae</taxon>
        <taxon>Clostridium</taxon>
    </lineage>
</organism>
<dbReference type="EC" id="3.1.1.96" evidence="1"/>
<dbReference type="EMBL" id="CP001078">
    <property type="protein sequence ID" value="ACD53326.1"/>
    <property type="molecule type" value="Genomic_DNA"/>
</dbReference>
<dbReference type="RefSeq" id="WP_012451255.1">
    <property type="nucleotide sequence ID" value="NC_010723.1"/>
</dbReference>
<dbReference type="SMR" id="B2V347"/>
<dbReference type="KEGG" id="cbt:CLH_0966"/>
<dbReference type="HOGENOM" id="CLU_076901_1_0_9"/>
<dbReference type="GO" id="GO:0005737">
    <property type="term" value="C:cytoplasm"/>
    <property type="evidence" value="ECO:0007669"/>
    <property type="project" value="UniProtKB-SubCell"/>
</dbReference>
<dbReference type="GO" id="GO:0051500">
    <property type="term" value="F:D-tyrosyl-tRNA(Tyr) deacylase activity"/>
    <property type="evidence" value="ECO:0007669"/>
    <property type="project" value="TreeGrafter"/>
</dbReference>
<dbReference type="GO" id="GO:0106026">
    <property type="term" value="F:Gly-tRNA(Ala) deacylase activity"/>
    <property type="evidence" value="ECO:0007669"/>
    <property type="project" value="UniProtKB-UniRule"/>
</dbReference>
<dbReference type="GO" id="GO:0043908">
    <property type="term" value="F:Ser(Gly)-tRNA(Ala) hydrolase activity"/>
    <property type="evidence" value="ECO:0007669"/>
    <property type="project" value="UniProtKB-UniRule"/>
</dbReference>
<dbReference type="GO" id="GO:0000049">
    <property type="term" value="F:tRNA binding"/>
    <property type="evidence" value="ECO:0007669"/>
    <property type="project" value="UniProtKB-UniRule"/>
</dbReference>
<dbReference type="GO" id="GO:0019478">
    <property type="term" value="P:D-amino acid catabolic process"/>
    <property type="evidence" value="ECO:0007669"/>
    <property type="project" value="UniProtKB-UniRule"/>
</dbReference>
<dbReference type="CDD" id="cd00563">
    <property type="entry name" value="Dtyr_deacylase"/>
    <property type="match status" value="1"/>
</dbReference>
<dbReference type="FunFam" id="3.50.80.10:FF:000001">
    <property type="entry name" value="D-aminoacyl-tRNA deacylase"/>
    <property type="match status" value="1"/>
</dbReference>
<dbReference type="Gene3D" id="3.50.80.10">
    <property type="entry name" value="D-tyrosyl-tRNA(Tyr) deacylase"/>
    <property type="match status" value="1"/>
</dbReference>
<dbReference type="HAMAP" id="MF_00518">
    <property type="entry name" value="Deacylase_Dtd"/>
    <property type="match status" value="1"/>
</dbReference>
<dbReference type="InterPro" id="IPR003732">
    <property type="entry name" value="Daa-tRNA_deacyls_DTD"/>
</dbReference>
<dbReference type="InterPro" id="IPR023509">
    <property type="entry name" value="DTD-like_sf"/>
</dbReference>
<dbReference type="NCBIfam" id="TIGR00256">
    <property type="entry name" value="D-aminoacyl-tRNA deacylase"/>
    <property type="match status" value="1"/>
</dbReference>
<dbReference type="PANTHER" id="PTHR10472:SF5">
    <property type="entry name" value="D-AMINOACYL-TRNA DEACYLASE 1"/>
    <property type="match status" value="1"/>
</dbReference>
<dbReference type="PANTHER" id="PTHR10472">
    <property type="entry name" value="D-TYROSYL-TRNA TYR DEACYLASE"/>
    <property type="match status" value="1"/>
</dbReference>
<dbReference type="Pfam" id="PF02580">
    <property type="entry name" value="Tyr_Deacylase"/>
    <property type="match status" value="1"/>
</dbReference>
<dbReference type="SUPFAM" id="SSF69500">
    <property type="entry name" value="DTD-like"/>
    <property type="match status" value="1"/>
</dbReference>
<sequence>MRAVVQRVTSSSVKVEDNIVGSIGKGLNVLIGISKSDTLEDLKYIRDKVINLRIFQDEKEKMNLSLLDIKGELLVISQFTLYGDCRKGRRPNFMDAKGGEEAKELYEEFLSLLKESNLKVETGEFGADMKVEINNDGPVTIILDSSKNF</sequence>
<comment type="function">
    <text evidence="1">An aminoacyl-tRNA editing enzyme that deacylates mischarged D-aminoacyl-tRNAs. Also deacylates mischarged glycyl-tRNA(Ala), protecting cells against glycine mischarging by AlaRS. Acts via tRNA-based rather than protein-based catalysis; rejects L-amino acids rather than detecting D-amino acids in the active site. By recycling D-aminoacyl-tRNA to D-amino acids and free tRNA molecules, this enzyme counteracts the toxicity associated with the formation of D-aminoacyl-tRNA entities in vivo and helps enforce protein L-homochirality.</text>
</comment>
<comment type="catalytic activity">
    <reaction evidence="1">
        <text>glycyl-tRNA(Ala) + H2O = tRNA(Ala) + glycine + H(+)</text>
        <dbReference type="Rhea" id="RHEA:53744"/>
        <dbReference type="Rhea" id="RHEA-COMP:9657"/>
        <dbReference type="Rhea" id="RHEA-COMP:13640"/>
        <dbReference type="ChEBI" id="CHEBI:15377"/>
        <dbReference type="ChEBI" id="CHEBI:15378"/>
        <dbReference type="ChEBI" id="CHEBI:57305"/>
        <dbReference type="ChEBI" id="CHEBI:78442"/>
        <dbReference type="ChEBI" id="CHEBI:78522"/>
        <dbReference type="EC" id="3.1.1.96"/>
    </reaction>
</comment>
<comment type="catalytic activity">
    <reaction evidence="1">
        <text>a D-aminoacyl-tRNA + H2O = a tRNA + a D-alpha-amino acid + H(+)</text>
        <dbReference type="Rhea" id="RHEA:13953"/>
        <dbReference type="Rhea" id="RHEA-COMP:10123"/>
        <dbReference type="Rhea" id="RHEA-COMP:10124"/>
        <dbReference type="ChEBI" id="CHEBI:15377"/>
        <dbReference type="ChEBI" id="CHEBI:15378"/>
        <dbReference type="ChEBI" id="CHEBI:59871"/>
        <dbReference type="ChEBI" id="CHEBI:78442"/>
        <dbReference type="ChEBI" id="CHEBI:79333"/>
        <dbReference type="EC" id="3.1.1.96"/>
    </reaction>
</comment>
<comment type="subunit">
    <text evidence="1">Homodimer.</text>
</comment>
<comment type="subcellular location">
    <subcellularLocation>
        <location evidence="1">Cytoplasm</location>
    </subcellularLocation>
</comment>
<comment type="domain">
    <text evidence="1">A Gly-cisPro motif from one monomer fits into the active site of the other monomer to allow specific chiral rejection of L-amino acids.</text>
</comment>
<comment type="similarity">
    <text evidence="1">Belongs to the DTD family.</text>
</comment>
<evidence type="ECO:0000255" key="1">
    <source>
        <dbReference type="HAMAP-Rule" id="MF_00518"/>
    </source>
</evidence>
<feature type="chain" id="PRO_1000127507" description="D-aminoacyl-tRNA deacylase">
    <location>
        <begin position="1"/>
        <end position="149"/>
    </location>
</feature>
<feature type="short sequence motif" description="Gly-cisPro motif, important for rejection of L-amino acids" evidence="1">
    <location>
        <begin position="137"/>
        <end position="138"/>
    </location>
</feature>
<keyword id="KW-0963">Cytoplasm</keyword>
<keyword id="KW-0378">Hydrolase</keyword>
<keyword id="KW-0694">RNA-binding</keyword>
<keyword id="KW-0820">tRNA-binding</keyword>